<comment type="function">
    <text evidence="1">Succinyl-CoA synthetase functions in the citric acid cycle (TCA), coupling the hydrolysis of succinyl-CoA to the synthesis of either ATP or GTP and thus represents the only step of substrate-level phosphorylation in the TCA. The beta subunit provides nucleotide specificity of the enzyme and binds the substrate succinate, while the binding sites for coenzyme A and phosphate are found in the alpha subunit.</text>
</comment>
<comment type="catalytic activity">
    <reaction evidence="1">
        <text>succinate + ATP + CoA = succinyl-CoA + ADP + phosphate</text>
        <dbReference type="Rhea" id="RHEA:17661"/>
        <dbReference type="ChEBI" id="CHEBI:30031"/>
        <dbReference type="ChEBI" id="CHEBI:30616"/>
        <dbReference type="ChEBI" id="CHEBI:43474"/>
        <dbReference type="ChEBI" id="CHEBI:57287"/>
        <dbReference type="ChEBI" id="CHEBI:57292"/>
        <dbReference type="ChEBI" id="CHEBI:456216"/>
        <dbReference type="EC" id="6.2.1.5"/>
    </reaction>
    <physiologicalReaction direction="right-to-left" evidence="1">
        <dbReference type="Rhea" id="RHEA:17663"/>
    </physiologicalReaction>
</comment>
<comment type="catalytic activity">
    <reaction evidence="1">
        <text>GTP + succinate + CoA = succinyl-CoA + GDP + phosphate</text>
        <dbReference type="Rhea" id="RHEA:22120"/>
        <dbReference type="ChEBI" id="CHEBI:30031"/>
        <dbReference type="ChEBI" id="CHEBI:37565"/>
        <dbReference type="ChEBI" id="CHEBI:43474"/>
        <dbReference type="ChEBI" id="CHEBI:57287"/>
        <dbReference type="ChEBI" id="CHEBI:57292"/>
        <dbReference type="ChEBI" id="CHEBI:58189"/>
    </reaction>
    <physiologicalReaction direction="right-to-left" evidence="1">
        <dbReference type="Rhea" id="RHEA:22122"/>
    </physiologicalReaction>
</comment>
<comment type="cofactor">
    <cofactor evidence="1">
        <name>Mg(2+)</name>
        <dbReference type="ChEBI" id="CHEBI:18420"/>
    </cofactor>
    <text evidence="1">Binds 1 Mg(2+) ion per subunit.</text>
</comment>
<comment type="pathway">
    <text evidence="1">Carbohydrate metabolism; tricarboxylic acid cycle; succinate from succinyl-CoA (ligase route): step 1/1.</text>
</comment>
<comment type="subunit">
    <text evidence="1">Heterotetramer of two alpha and two beta subunits.</text>
</comment>
<comment type="similarity">
    <text evidence="1">Belongs to the succinate/malate CoA ligase beta subunit family.</text>
</comment>
<name>SUCC_FRATW</name>
<sequence length="387" mass="41527">MNLHEYQAKDLLESYGLKVQKGIVAHNPNEAAQAFDQLGGKFAVVKAQVHAGGRGKAGGVKVVKSSQEAREVAESLIGKNLVTFQTDAEGQPVNSVGVFEDVYPVTRELYLGAVVDRSSRKVTFMASTEGGVDIEEVAHNSPEKILKVEVDPLVGLQPFQAREVAFKLGLEGKQINDFVKTMLGAYKAFIECDFALFEINPLAVRENGEIVCVDGKINLDSNALYRHPKLLALRDKSQENAKELKASEHELNYVALKGNIGCMVNGAGLAMATMDIIQLYGGKPANFLDVGGGATKERVIEAFKLILDDENVKAVLINIFGGIVRCDMIAEAIIEAVKEVNVTVPVVVRLEGNNAEKGAKILADSGLKLIPADGLADAADKVVKSLG</sequence>
<reference key="1">
    <citation type="journal article" date="2007" name="PLoS ONE">
        <title>Complete genomic characterization of a pathogenic A.II strain of Francisella tularensis subspecies tularensis.</title>
        <authorList>
            <person name="Beckstrom-Sternberg S.M."/>
            <person name="Auerbach R.K."/>
            <person name="Godbole S."/>
            <person name="Pearson J.V."/>
            <person name="Beckstrom-Sternberg J.S."/>
            <person name="Deng Z."/>
            <person name="Munk C."/>
            <person name="Kubota K."/>
            <person name="Zhou Y."/>
            <person name="Bruce D."/>
            <person name="Noronha J."/>
            <person name="Scheuermann R.H."/>
            <person name="Wang A."/>
            <person name="Wei X."/>
            <person name="Wang J."/>
            <person name="Hao J."/>
            <person name="Wagner D.M."/>
            <person name="Brettin T.S."/>
            <person name="Brown N."/>
            <person name="Gilna P."/>
            <person name="Keim P.S."/>
        </authorList>
    </citation>
    <scope>NUCLEOTIDE SEQUENCE [LARGE SCALE GENOMIC DNA]</scope>
    <source>
        <strain>WY96-3418</strain>
    </source>
</reference>
<dbReference type="EC" id="6.2.1.5" evidence="1"/>
<dbReference type="EMBL" id="CP000608">
    <property type="protein sequence ID" value="ABO47272.1"/>
    <property type="molecule type" value="Genomic_DNA"/>
</dbReference>
<dbReference type="RefSeq" id="WP_003026859.1">
    <property type="nucleotide sequence ID" value="NC_009257.1"/>
</dbReference>
<dbReference type="SMR" id="A4IZC2"/>
<dbReference type="KEGG" id="ftw:FTW_1561"/>
<dbReference type="HOGENOM" id="CLU_037430_0_2_6"/>
<dbReference type="UniPathway" id="UPA00223">
    <property type="reaction ID" value="UER00999"/>
</dbReference>
<dbReference type="GO" id="GO:0005829">
    <property type="term" value="C:cytosol"/>
    <property type="evidence" value="ECO:0007669"/>
    <property type="project" value="TreeGrafter"/>
</dbReference>
<dbReference type="GO" id="GO:0042709">
    <property type="term" value="C:succinate-CoA ligase complex"/>
    <property type="evidence" value="ECO:0007669"/>
    <property type="project" value="TreeGrafter"/>
</dbReference>
<dbReference type="GO" id="GO:0005524">
    <property type="term" value="F:ATP binding"/>
    <property type="evidence" value="ECO:0007669"/>
    <property type="project" value="UniProtKB-UniRule"/>
</dbReference>
<dbReference type="GO" id="GO:0000287">
    <property type="term" value="F:magnesium ion binding"/>
    <property type="evidence" value="ECO:0007669"/>
    <property type="project" value="UniProtKB-UniRule"/>
</dbReference>
<dbReference type="GO" id="GO:0004775">
    <property type="term" value="F:succinate-CoA ligase (ADP-forming) activity"/>
    <property type="evidence" value="ECO:0007669"/>
    <property type="project" value="UniProtKB-UniRule"/>
</dbReference>
<dbReference type="GO" id="GO:0004776">
    <property type="term" value="F:succinate-CoA ligase (GDP-forming) activity"/>
    <property type="evidence" value="ECO:0007669"/>
    <property type="project" value="RHEA"/>
</dbReference>
<dbReference type="GO" id="GO:0006104">
    <property type="term" value="P:succinyl-CoA metabolic process"/>
    <property type="evidence" value="ECO:0007669"/>
    <property type="project" value="TreeGrafter"/>
</dbReference>
<dbReference type="GO" id="GO:0006099">
    <property type="term" value="P:tricarboxylic acid cycle"/>
    <property type="evidence" value="ECO:0007669"/>
    <property type="project" value="UniProtKB-UniRule"/>
</dbReference>
<dbReference type="FunFam" id="3.30.1490.20:FF:000002">
    <property type="entry name" value="Succinate--CoA ligase [ADP-forming] subunit beta"/>
    <property type="match status" value="1"/>
</dbReference>
<dbReference type="FunFam" id="3.30.470.20:FF:000002">
    <property type="entry name" value="Succinate--CoA ligase [ADP-forming] subunit beta"/>
    <property type="match status" value="1"/>
</dbReference>
<dbReference type="FunFam" id="3.40.50.261:FF:000001">
    <property type="entry name" value="Succinate--CoA ligase [ADP-forming] subunit beta"/>
    <property type="match status" value="1"/>
</dbReference>
<dbReference type="Gene3D" id="3.30.1490.20">
    <property type="entry name" value="ATP-grasp fold, A domain"/>
    <property type="match status" value="1"/>
</dbReference>
<dbReference type="Gene3D" id="3.30.470.20">
    <property type="entry name" value="ATP-grasp fold, B domain"/>
    <property type="match status" value="1"/>
</dbReference>
<dbReference type="Gene3D" id="3.40.50.261">
    <property type="entry name" value="Succinyl-CoA synthetase domains"/>
    <property type="match status" value="1"/>
</dbReference>
<dbReference type="HAMAP" id="MF_00558">
    <property type="entry name" value="Succ_CoA_beta"/>
    <property type="match status" value="1"/>
</dbReference>
<dbReference type="InterPro" id="IPR011761">
    <property type="entry name" value="ATP-grasp"/>
</dbReference>
<dbReference type="InterPro" id="IPR013650">
    <property type="entry name" value="ATP-grasp_succ-CoA_synth-type"/>
</dbReference>
<dbReference type="InterPro" id="IPR013815">
    <property type="entry name" value="ATP_grasp_subdomain_1"/>
</dbReference>
<dbReference type="InterPro" id="IPR017866">
    <property type="entry name" value="Succ-CoA_synthase_bsu_CS"/>
</dbReference>
<dbReference type="InterPro" id="IPR005811">
    <property type="entry name" value="SUCC_ACL_C"/>
</dbReference>
<dbReference type="InterPro" id="IPR005809">
    <property type="entry name" value="Succ_CoA_ligase-like_bsu"/>
</dbReference>
<dbReference type="InterPro" id="IPR016102">
    <property type="entry name" value="Succinyl-CoA_synth-like"/>
</dbReference>
<dbReference type="NCBIfam" id="NF001913">
    <property type="entry name" value="PRK00696.1"/>
    <property type="match status" value="1"/>
</dbReference>
<dbReference type="NCBIfam" id="TIGR01016">
    <property type="entry name" value="sucCoAbeta"/>
    <property type="match status" value="1"/>
</dbReference>
<dbReference type="PANTHER" id="PTHR11815:SF10">
    <property type="entry name" value="SUCCINATE--COA LIGASE [GDP-FORMING] SUBUNIT BETA, MITOCHONDRIAL"/>
    <property type="match status" value="1"/>
</dbReference>
<dbReference type="PANTHER" id="PTHR11815">
    <property type="entry name" value="SUCCINYL-COA SYNTHETASE BETA CHAIN"/>
    <property type="match status" value="1"/>
</dbReference>
<dbReference type="Pfam" id="PF08442">
    <property type="entry name" value="ATP-grasp_2"/>
    <property type="match status" value="1"/>
</dbReference>
<dbReference type="Pfam" id="PF00549">
    <property type="entry name" value="Ligase_CoA"/>
    <property type="match status" value="1"/>
</dbReference>
<dbReference type="PIRSF" id="PIRSF001554">
    <property type="entry name" value="SucCS_beta"/>
    <property type="match status" value="1"/>
</dbReference>
<dbReference type="SUPFAM" id="SSF56059">
    <property type="entry name" value="Glutathione synthetase ATP-binding domain-like"/>
    <property type="match status" value="1"/>
</dbReference>
<dbReference type="SUPFAM" id="SSF52210">
    <property type="entry name" value="Succinyl-CoA synthetase domains"/>
    <property type="match status" value="1"/>
</dbReference>
<dbReference type="PROSITE" id="PS50975">
    <property type="entry name" value="ATP_GRASP"/>
    <property type="match status" value="1"/>
</dbReference>
<dbReference type="PROSITE" id="PS01217">
    <property type="entry name" value="SUCCINYL_COA_LIG_3"/>
    <property type="match status" value="1"/>
</dbReference>
<evidence type="ECO:0000255" key="1">
    <source>
        <dbReference type="HAMAP-Rule" id="MF_00558"/>
    </source>
</evidence>
<accession>A4IZC2</accession>
<protein>
    <recommendedName>
        <fullName evidence="1">Succinate--CoA ligase [ADP-forming] subunit beta</fullName>
        <ecNumber evidence="1">6.2.1.5</ecNumber>
    </recommendedName>
    <alternativeName>
        <fullName evidence="1">Succinyl-CoA synthetase subunit beta</fullName>
        <shortName evidence="1">SCS-beta</shortName>
    </alternativeName>
</protein>
<organism>
    <name type="scientific">Francisella tularensis subsp. tularensis (strain WY96-3418)</name>
    <dbReference type="NCBI Taxonomy" id="418136"/>
    <lineage>
        <taxon>Bacteria</taxon>
        <taxon>Pseudomonadati</taxon>
        <taxon>Pseudomonadota</taxon>
        <taxon>Gammaproteobacteria</taxon>
        <taxon>Thiotrichales</taxon>
        <taxon>Francisellaceae</taxon>
        <taxon>Francisella</taxon>
    </lineage>
</organism>
<proteinExistence type="inferred from homology"/>
<keyword id="KW-0067">ATP-binding</keyword>
<keyword id="KW-0436">Ligase</keyword>
<keyword id="KW-0460">Magnesium</keyword>
<keyword id="KW-0479">Metal-binding</keyword>
<keyword id="KW-0547">Nucleotide-binding</keyword>
<keyword id="KW-0816">Tricarboxylic acid cycle</keyword>
<gene>
    <name evidence="1" type="primary">sucC</name>
    <name type="ordered locus">FTW_1561</name>
</gene>
<feature type="chain" id="PRO_1000082094" description="Succinate--CoA ligase [ADP-forming] subunit beta">
    <location>
        <begin position="1"/>
        <end position="387"/>
    </location>
</feature>
<feature type="domain" description="ATP-grasp" evidence="1">
    <location>
        <begin position="9"/>
        <end position="245"/>
    </location>
</feature>
<feature type="binding site" evidence="1">
    <location>
        <position position="46"/>
    </location>
    <ligand>
        <name>ATP</name>
        <dbReference type="ChEBI" id="CHEBI:30616"/>
    </ligand>
</feature>
<feature type="binding site" evidence="1">
    <location>
        <begin position="53"/>
        <end position="55"/>
    </location>
    <ligand>
        <name>ATP</name>
        <dbReference type="ChEBI" id="CHEBI:30616"/>
    </ligand>
</feature>
<feature type="binding site" evidence="1">
    <location>
        <position position="100"/>
    </location>
    <ligand>
        <name>ATP</name>
        <dbReference type="ChEBI" id="CHEBI:30616"/>
    </ligand>
</feature>
<feature type="binding site" evidence="1">
    <location>
        <position position="103"/>
    </location>
    <ligand>
        <name>ATP</name>
        <dbReference type="ChEBI" id="CHEBI:30616"/>
    </ligand>
</feature>
<feature type="binding site" evidence="1">
    <location>
        <position position="108"/>
    </location>
    <ligand>
        <name>ATP</name>
        <dbReference type="ChEBI" id="CHEBI:30616"/>
    </ligand>
</feature>
<feature type="binding site" evidence="1">
    <location>
        <position position="200"/>
    </location>
    <ligand>
        <name>Mg(2+)</name>
        <dbReference type="ChEBI" id="CHEBI:18420"/>
    </ligand>
</feature>
<feature type="binding site" evidence="1">
    <location>
        <position position="214"/>
    </location>
    <ligand>
        <name>Mg(2+)</name>
        <dbReference type="ChEBI" id="CHEBI:18420"/>
    </ligand>
</feature>
<feature type="binding site" evidence="1">
    <location>
        <position position="265"/>
    </location>
    <ligand>
        <name>substrate</name>
        <note>ligand shared with subunit alpha</note>
    </ligand>
</feature>
<feature type="binding site" evidence="1">
    <location>
        <begin position="322"/>
        <end position="324"/>
    </location>
    <ligand>
        <name>substrate</name>
        <note>ligand shared with subunit alpha</note>
    </ligand>
</feature>